<name>MNMG_ECOK1</name>
<evidence type="ECO:0000255" key="1">
    <source>
        <dbReference type="HAMAP-Rule" id="MF_00129"/>
    </source>
</evidence>
<organism>
    <name type="scientific">Escherichia coli O1:K1 / APEC</name>
    <dbReference type="NCBI Taxonomy" id="405955"/>
    <lineage>
        <taxon>Bacteria</taxon>
        <taxon>Pseudomonadati</taxon>
        <taxon>Pseudomonadota</taxon>
        <taxon>Gammaproteobacteria</taxon>
        <taxon>Enterobacterales</taxon>
        <taxon>Enterobacteriaceae</taxon>
        <taxon>Escherichia</taxon>
    </lineage>
</organism>
<comment type="function">
    <text evidence="1">NAD-binding protein involved in the addition of a carboxymethylaminomethyl (cmnm) group at the wobble position (U34) of certain tRNAs, forming tRNA-cmnm(5)s(2)U34.</text>
</comment>
<comment type="cofactor">
    <cofactor evidence="1">
        <name>FAD</name>
        <dbReference type="ChEBI" id="CHEBI:57692"/>
    </cofactor>
</comment>
<comment type="subunit">
    <text evidence="1">Homodimer. Heterotetramer of two MnmE and two MnmG subunits.</text>
</comment>
<comment type="subcellular location">
    <subcellularLocation>
        <location evidence="1">Cytoplasm</location>
    </subcellularLocation>
</comment>
<comment type="similarity">
    <text evidence="1">Belongs to the MnmG family.</text>
</comment>
<gene>
    <name evidence="1" type="primary">mnmG</name>
    <name evidence="1" type="synonym">gidA</name>
    <name type="ordered locus">Ecok1_37170</name>
    <name type="ORF">APECO1_2722</name>
</gene>
<reference key="1">
    <citation type="journal article" date="2007" name="J. Bacteriol.">
        <title>The genome sequence of avian pathogenic Escherichia coli strain O1:K1:H7 shares strong similarities with human extraintestinal pathogenic E. coli genomes.</title>
        <authorList>
            <person name="Johnson T.J."/>
            <person name="Kariyawasam S."/>
            <person name="Wannemuehler Y."/>
            <person name="Mangiamele P."/>
            <person name="Johnson S.J."/>
            <person name="Doetkott C."/>
            <person name="Skyberg J.A."/>
            <person name="Lynne A.M."/>
            <person name="Johnson J.R."/>
            <person name="Nolan L.K."/>
        </authorList>
    </citation>
    <scope>NUCLEOTIDE SEQUENCE [LARGE SCALE GENOMIC DNA]</scope>
</reference>
<dbReference type="EMBL" id="CP000468">
    <property type="protein sequence ID" value="ABJ03211.1"/>
    <property type="molecule type" value="Genomic_DNA"/>
</dbReference>
<dbReference type="RefSeq" id="WP_000499800.1">
    <property type="nucleotide sequence ID" value="NZ_CADILS010000011.1"/>
</dbReference>
<dbReference type="SMR" id="A1AHS1"/>
<dbReference type="KEGG" id="ecv:APECO1_2722"/>
<dbReference type="HOGENOM" id="CLU_007831_2_2_6"/>
<dbReference type="Proteomes" id="UP000008216">
    <property type="component" value="Chromosome"/>
</dbReference>
<dbReference type="GO" id="GO:0005829">
    <property type="term" value="C:cytosol"/>
    <property type="evidence" value="ECO:0007669"/>
    <property type="project" value="TreeGrafter"/>
</dbReference>
<dbReference type="GO" id="GO:0050660">
    <property type="term" value="F:flavin adenine dinucleotide binding"/>
    <property type="evidence" value="ECO:0007669"/>
    <property type="project" value="UniProtKB-UniRule"/>
</dbReference>
<dbReference type="GO" id="GO:0030488">
    <property type="term" value="P:tRNA methylation"/>
    <property type="evidence" value="ECO:0007669"/>
    <property type="project" value="TreeGrafter"/>
</dbReference>
<dbReference type="GO" id="GO:0002098">
    <property type="term" value="P:tRNA wobble uridine modification"/>
    <property type="evidence" value="ECO:0007669"/>
    <property type="project" value="InterPro"/>
</dbReference>
<dbReference type="FunFam" id="1.10.10.1800:FF:000001">
    <property type="entry name" value="tRNA uridine 5-carboxymethylaminomethyl modification enzyme MnmG"/>
    <property type="match status" value="1"/>
</dbReference>
<dbReference type="FunFam" id="1.10.150.570:FF:000001">
    <property type="entry name" value="tRNA uridine 5-carboxymethylaminomethyl modification enzyme MnmG"/>
    <property type="match status" value="1"/>
</dbReference>
<dbReference type="FunFam" id="3.50.50.60:FF:000002">
    <property type="entry name" value="tRNA uridine 5-carboxymethylaminomethyl modification enzyme MnmG"/>
    <property type="match status" value="1"/>
</dbReference>
<dbReference type="FunFam" id="3.50.50.60:FF:000010">
    <property type="entry name" value="tRNA uridine 5-carboxymethylaminomethyl modification enzyme MnmG"/>
    <property type="match status" value="1"/>
</dbReference>
<dbReference type="Gene3D" id="3.50.50.60">
    <property type="entry name" value="FAD/NAD(P)-binding domain"/>
    <property type="match status" value="2"/>
</dbReference>
<dbReference type="Gene3D" id="1.10.150.570">
    <property type="entry name" value="GidA associated domain, C-terminal subdomain"/>
    <property type="match status" value="1"/>
</dbReference>
<dbReference type="Gene3D" id="1.10.10.1800">
    <property type="entry name" value="tRNA uridine 5-carboxymethylaminomethyl modification enzyme MnmG/GidA"/>
    <property type="match status" value="1"/>
</dbReference>
<dbReference type="HAMAP" id="MF_00129">
    <property type="entry name" value="MnmG_GidA"/>
    <property type="match status" value="1"/>
</dbReference>
<dbReference type="InterPro" id="IPR036188">
    <property type="entry name" value="FAD/NAD-bd_sf"/>
</dbReference>
<dbReference type="InterPro" id="IPR049312">
    <property type="entry name" value="GIDA_C_N"/>
</dbReference>
<dbReference type="InterPro" id="IPR004416">
    <property type="entry name" value="MnmG"/>
</dbReference>
<dbReference type="InterPro" id="IPR002218">
    <property type="entry name" value="MnmG-rel"/>
</dbReference>
<dbReference type="InterPro" id="IPR020595">
    <property type="entry name" value="MnmG-rel_CS"/>
</dbReference>
<dbReference type="InterPro" id="IPR026904">
    <property type="entry name" value="MnmG_C"/>
</dbReference>
<dbReference type="InterPro" id="IPR047001">
    <property type="entry name" value="MnmG_C_subdom"/>
</dbReference>
<dbReference type="InterPro" id="IPR044920">
    <property type="entry name" value="MnmG_C_subdom_sf"/>
</dbReference>
<dbReference type="InterPro" id="IPR040131">
    <property type="entry name" value="MnmG_N"/>
</dbReference>
<dbReference type="NCBIfam" id="TIGR00136">
    <property type="entry name" value="mnmG_gidA"/>
    <property type="match status" value="1"/>
</dbReference>
<dbReference type="PANTHER" id="PTHR11806">
    <property type="entry name" value="GLUCOSE INHIBITED DIVISION PROTEIN A"/>
    <property type="match status" value="1"/>
</dbReference>
<dbReference type="PANTHER" id="PTHR11806:SF0">
    <property type="entry name" value="PROTEIN MTO1 HOMOLOG, MITOCHONDRIAL"/>
    <property type="match status" value="1"/>
</dbReference>
<dbReference type="Pfam" id="PF01134">
    <property type="entry name" value="GIDA"/>
    <property type="match status" value="1"/>
</dbReference>
<dbReference type="Pfam" id="PF21680">
    <property type="entry name" value="GIDA_C_1st"/>
    <property type="match status" value="1"/>
</dbReference>
<dbReference type="Pfam" id="PF13932">
    <property type="entry name" value="SAM_GIDA_C"/>
    <property type="match status" value="1"/>
</dbReference>
<dbReference type="SMART" id="SM01228">
    <property type="entry name" value="GIDA_assoc_3"/>
    <property type="match status" value="1"/>
</dbReference>
<dbReference type="SUPFAM" id="SSF51905">
    <property type="entry name" value="FAD/NAD(P)-binding domain"/>
    <property type="match status" value="1"/>
</dbReference>
<dbReference type="PROSITE" id="PS01280">
    <property type="entry name" value="GIDA_1"/>
    <property type="match status" value="1"/>
</dbReference>
<dbReference type="PROSITE" id="PS01281">
    <property type="entry name" value="GIDA_2"/>
    <property type="match status" value="1"/>
</dbReference>
<sequence length="629" mass="69535">MFYPDPFDVIIIGGGHAGTEAAMAAARMGQQTLLLTHNIDTLGQMSCNPAIGGIGKGHLVKEVDALGGLMAKAIDQAGIQFRILNASKGPAVRATRAQADRVLYRQAVRTALENQPNLMIFQQAVEDLIVENDRVVGAVTQMGLKFRAKAVVLTVGTFLDGKIHIGLDNYSGGRAGDPPSIPLSRRLRELPLRVGRLKTGTPPRIDARTIDFSVLAQQHGDNPMPVFSFMGNASQHPQQVPCYITHTNEKTHDVIRSNLDRSPMYAGVIEGVGPRYCPSIEDKVMRFAERNQHQIFLEPEGLTSNEIYPNGISTSLPFDVQMQIVRSMQGMENAKIVRPGYAIEYDFFDPRDLKPTLESKFIQGLFFAGQINGTTGYEEAAAQGLLAGLNAARLSADKEGWAPARSQAYLGVLVDDLCTLGTKEPYRMFTSRAEYRLMLREDNADLRLTEIGRELGLVDDERWARFNEKLENIERERQRLKSTWVTPSAEAAAEVNAHLTAPLSREASGEDLLRRPEMTYEKLTTLTPFAPALTDEQAAEQVEIQVKYEGYIARQQDEIEKQLRNENTLLPATLDYRQVSGLSNEVIAKLNDHKPASIGQASRISGVTPAAISILLVWLKKQGMLRRSA</sequence>
<protein>
    <recommendedName>
        <fullName evidence="1">tRNA uridine 5-carboxymethylaminomethyl modification enzyme MnmG</fullName>
    </recommendedName>
    <alternativeName>
        <fullName evidence="1">Glucose-inhibited division protein A</fullName>
    </alternativeName>
</protein>
<feature type="chain" id="PRO_1000016592" description="tRNA uridine 5-carboxymethylaminomethyl modification enzyme MnmG">
    <location>
        <begin position="1"/>
        <end position="629"/>
    </location>
</feature>
<feature type="binding site" evidence="1">
    <location>
        <begin position="13"/>
        <end position="18"/>
    </location>
    <ligand>
        <name>FAD</name>
        <dbReference type="ChEBI" id="CHEBI:57692"/>
    </ligand>
</feature>
<feature type="binding site" evidence="1">
    <location>
        <position position="125"/>
    </location>
    <ligand>
        <name>FAD</name>
        <dbReference type="ChEBI" id="CHEBI:57692"/>
    </ligand>
</feature>
<feature type="binding site" evidence="1">
    <location>
        <position position="180"/>
    </location>
    <ligand>
        <name>FAD</name>
        <dbReference type="ChEBI" id="CHEBI:57692"/>
    </ligand>
</feature>
<feature type="binding site" evidence="1">
    <location>
        <begin position="273"/>
        <end position="287"/>
    </location>
    <ligand>
        <name>NAD(+)</name>
        <dbReference type="ChEBI" id="CHEBI:57540"/>
    </ligand>
</feature>
<feature type="binding site" evidence="1">
    <location>
        <position position="370"/>
    </location>
    <ligand>
        <name>FAD</name>
        <dbReference type="ChEBI" id="CHEBI:57692"/>
    </ligand>
</feature>
<accession>A1AHS1</accession>
<proteinExistence type="inferred from homology"/>
<keyword id="KW-0963">Cytoplasm</keyword>
<keyword id="KW-0274">FAD</keyword>
<keyword id="KW-0285">Flavoprotein</keyword>
<keyword id="KW-0520">NAD</keyword>
<keyword id="KW-1185">Reference proteome</keyword>
<keyword id="KW-0819">tRNA processing</keyword>